<gene>
    <name evidence="1" type="primary">rplU</name>
    <name type="ordered locus">VP0328</name>
</gene>
<organism>
    <name type="scientific">Vibrio parahaemolyticus serotype O3:K6 (strain RIMD 2210633)</name>
    <dbReference type="NCBI Taxonomy" id="223926"/>
    <lineage>
        <taxon>Bacteria</taxon>
        <taxon>Pseudomonadati</taxon>
        <taxon>Pseudomonadota</taxon>
        <taxon>Gammaproteobacteria</taxon>
        <taxon>Vibrionales</taxon>
        <taxon>Vibrionaceae</taxon>
        <taxon>Vibrio</taxon>
    </lineage>
</organism>
<sequence>MYAVFQSGGKQHRVSEGQTLRLEKLDVETGATVEFDKVLLVANGEDIKVGAPLVEGGKIVAEVVQHGRGDKVKIVKFRRRKHSRKQQGHRQWFTEVKITGINA</sequence>
<accession>Q87SU4</accession>
<keyword id="KW-0687">Ribonucleoprotein</keyword>
<keyword id="KW-0689">Ribosomal protein</keyword>
<keyword id="KW-0694">RNA-binding</keyword>
<keyword id="KW-0699">rRNA-binding</keyword>
<protein>
    <recommendedName>
        <fullName evidence="1">Large ribosomal subunit protein bL21</fullName>
    </recommendedName>
    <alternativeName>
        <fullName evidence="2">50S ribosomal protein L21</fullName>
    </alternativeName>
</protein>
<proteinExistence type="inferred from homology"/>
<feature type="chain" id="PRO_0000269423" description="Large ribosomal subunit protein bL21">
    <location>
        <begin position="1"/>
        <end position="103"/>
    </location>
</feature>
<reference key="1">
    <citation type="journal article" date="2003" name="Lancet">
        <title>Genome sequence of Vibrio parahaemolyticus: a pathogenic mechanism distinct from that of V. cholerae.</title>
        <authorList>
            <person name="Makino K."/>
            <person name="Oshima K."/>
            <person name="Kurokawa K."/>
            <person name="Yokoyama K."/>
            <person name="Uda T."/>
            <person name="Tagomori K."/>
            <person name="Iijima Y."/>
            <person name="Najima M."/>
            <person name="Nakano M."/>
            <person name="Yamashita A."/>
            <person name="Kubota Y."/>
            <person name="Kimura S."/>
            <person name="Yasunaga T."/>
            <person name="Honda T."/>
            <person name="Shinagawa H."/>
            <person name="Hattori M."/>
            <person name="Iida T."/>
        </authorList>
    </citation>
    <scope>NUCLEOTIDE SEQUENCE [LARGE SCALE GENOMIC DNA]</scope>
    <source>
        <strain>RIMD 2210633</strain>
    </source>
</reference>
<dbReference type="EMBL" id="BA000031">
    <property type="protein sequence ID" value="BAC58591.1"/>
    <property type="molecule type" value="Genomic_DNA"/>
</dbReference>
<dbReference type="RefSeq" id="NP_796707.1">
    <property type="nucleotide sequence ID" value="NC_004603.1"/>
</dbReference>
<dbReference type="RefSeq" id="WP_005383096.1">
    <property type="nucleotide sequence ID" value="NC_004603.1"/>
</dbReference>
<dbReference type="SMR" id="Q87SU4"/>
<dbReference type="GeneID" id="75168918"/>
<dbReference type="KEGG" id="vpa:VP0328"/>
<dbReference type="PATRIC" id="fig|223926.6.peg.315"/>
<dbReference type="eggNOG" id="COG0261">
    <property type="taxonomic scope" value="Bacteria"/>
</dbReference>
<dbReference type="HOGENOM" id="CLU_061463_3_3_6"/>
<dbReference type="Proteomes" id="UP000002493">
    <property type="component" value="Chromosome 1"/>
</dbReference>
<dbReference type="GO" id="GO:0005737">
    <property type="term" value="C:cytoplasm"/>
    <property type="evidence" value="ECO:0007669"/>
    <property type="project" value="UniProtKB-ARBA"/>
</dbReference>
<dbReference type="GO" id="GO:1990904">
    <property type="term" value="C:ribonucleoprotein complex"/>
    <property type="evidence" value="ECO:0007669"/>
    <property type="project" value="UniProtKB-KW"/>
</dbReference>
<dbReference type="GO" id="GO:0005840">
    <property type="term" value="C:ribosome"/>
    <property type="evidence" value="ECO:0007669"/>
    <property type="project" value="UniProtKB-KW"/>
</dbReference>
<dbReference type="GO" id="GO:0019843">
    <property type="term" value="F:rRNA binding"/>
    <property type="evidence" value="ECO:0007669"/>
    <property type="project" value="UniProtKB-UniRule"/>
</dbReference>
<dbReference type="GO" id="GO:0003735">
    <property type="term" value="F:structural constituent of ribosome"/>
    <property type="evidence" value="ECO:0007669"/>
    <property type="project" value="InterPro"/>
</dbReference>
<dbReference type="GO" id="GO:0006412">
    <property type="term" value="P:translation"/>
    <property type="evidence" value="ECO:0007669"/>
    <property type="project" value="UniProtKB-UniRule"/>
</dbReference>
<dbReference type="HAMAP" id="MF_01363">
    <property type="entry name" value="Ribosomal_bL21"/>
    <property type="match status" value="1"/>
</dbReference>
<dbReference type="InterPro" id="IPR028909">
    <property type="entry name" value="bL21-like"/>
</dbReference>
<dbReference type="InterPro" id="IPR036164">
    <property type="entry name" value="bL21-like_sf"/>
</dbReference>
<dbReference type="InterPro" id="IPR001787">
    <property type="entry name" value="Ribosomal_bL21"/>
</dbReference>
<dbReference type="InterPro" id="IPR018258">
    <property type="entry name" value="Ribosomal_bL21_CS"/>
</dbReference>
<dbReference type="NCBIfam" id="TIGR00061">
    <property type="entry name" value="L21"/>
    <property type="match status" value="1"/>
</dbReference>
<dbReference type="PANTHER" id="PTHR21349">
    <property type="entry name" value="50S RIBOSOMAL PROTEIN L21"/>
    <property type="match status" value="1"/>
</dbReference>
<dbReference type="PANTHER" id="PTHR21349:SF0">
    <property type="entry name" value="LARGE RIBOSOMAL SUBUNIT PROTEIN BL21M"/>
    <property type="match status" value="1"/>
</dbReference>
<dbReference type="Pfam" id="PF00829">
    <property type="entry name" value="Ribosomal_L21p"/>
    <property type="match status" value="1"/>
</dbReference>
<dbReference type="SUPFAM" id="SSF141091">
    <property type="entry name" value="L21p-like"/>
    <property type="match status" value="1"/>
</dbReference>
<dbReference type="PROSITE" id="PS01169">
    <property type="entry name" value="RIBOSOMAL_L21"/>
    <property type="match status" value="1"/>
</dbReference>
<comment type="function">
    <text evidence="1">This protein binds to 23S rRNA in the presence of protein L20.</text>
</comment>
<comment type="subunit">
    <text evidence="1">Part of the 50S ribosomal subunit. Contacts protein L20.</text>
</comment>
<comment type="similarity">
    <text evidence="1">Belongs to the bacterial ribosomal protein bL21 family.</text>
</comment>
<evidence type="ECO:0000255" key="1">
    <source>
        <dbReference type="HAMAP-Rule" id="MF_01363"/>
    </source>
</evidence>
<evidence type="ECO:0000305" key="2"/>
<name>RL21_VIBPA</name>